<comment type="function">
    <text evidence="1">NDH shuttles electrons from NAD(P)H:plastoquinone, via FMN and iron-sulfur (Fe-S) centers, to quinones in the photosynthetic chain and possibly in a chloroplast respiratory chain. The immediate electron acceptor for the enzyme in this species is believed to be plastoquinone. Couples the redox reaction to proton translocation, and thus conserves the redox energy in a proton gradient.</text>
</comment>
<comment type="catalytic activity">
    <reaction evidence="1">
        <text>a plastoquinone + NADH + (n+1) H(+)(in) = a plastoquinol + NAD(+) + n H(+)(out)</text>
        <dbReference type="Rhea" id="RHEA:42608"/>
        <dbReference type="Rhea" id="RHEA-COMP:9561"/>
        <dbReference type="Rhea" id="RHEA-COMP:9562"/>
        <dbReference type="ChEBI" id="CHEBI:15378"/>
        <dbReference type="ChEBI" id="CHEBI:17757"/>
        <dbReference type="ChEBI" id="CHEBI:57540"/>
        <dbReference type="ChEBI" id="CHEBI:57945"/>
        <dbReference type="ChEBI" id="CHEBI:62192"/>
    </reaction>
</comment>
<comment type="catalytic activity">
    <reaction evidence="1">
        <text>a plastoquinone + NADPH + (n+1) H(+)(in) = a plastoquinol + NADP(+) + n H(+)(out)</text>
        <dbReference type="Rhea" id="RHEA:42612"/>
        <dbReference type="Rhea" id="RHEA-COMP:9561"/>
        <dbReference type="Rhea" id="RHEA-COMP:9562"/>
        <dbReference type="ChEBI" id="CHEBI:15378"/>
        <dbReference type="ChEBI" id="CHEBI:17757"/>
        <dbReference type="ChEBI" id="CHEBI:57783"/>
        <dbReference type="ChEBI" id="CHEBI:58349"/>
        <dbReference type="ChEBI" id="CHEBI:62192"/>
    </reaction>
</comment>
<comment type="subunit">
    <text evidence="1">NDH is composed of at least 16 different subunits, 5 of which are encoded in the nucleus.</text>
</comment>
<comment type="subcellular location">
    <subcellularLocation>
        <location evidence="1">Plastid</location>
        <location evidence="1">Chloroplast thylakoid membrane</location>
        <topology evidence="1">Peripheral membrane protein</topology>
        <orientation evidence="1">Stromal side</orientation>
    </subcellularLocation>
</comment>
<comment type="similarity">
    <text evidence="1">Belongs to the complex I 30 kDa subunit family.</text>
</comment>
<protein>
    <recommendedName>
        <fullName evidence="1">NAD(P)H-quinone oxidoreductase subunit J, chloroplastic</fullName>
        <ecNumber evidence="1">7.1.1.-</ecNumber>
    </recommendedName>
    <alternativeName>
        <fullName>NAD(P)H dehydrogenase subunit J</fullName>
    </alternativeName>
    <alternativeName>
        <fullName evidence="1">NADH-plastoquinone oxidoreductase subunit J</fullName>
    </alternativeName>
</protein>
<geneLocation type="chloroplast"/>
<organism>
    <name type="scientific">Marchantia polymorpha</name>
    <name type="common">Common liverwort</name>
    <name type="synonym">Marchantia aquatica</name>
    <dbReference type="NCBI Taxonomy" id="3197"/>
    <lineage>
        <taxon>Eukaryota</taxon>
        <taxon>Viridiplantae</taxon>
        <taxon>Streptophyta</taxon>
        <taxon>Embryophyta</taxon>
        <taxon>Marchantiophyta</taxon>
        <taxon>Marchantiopsida</taxon>
        <taxon>Marchantiidae</taxon>
        <taxon>Marchantiales</taxon>
        <taxon>Marchantiaceae</taxon>
        <taxon>Marchantia</taxon>
    </lineage>
</organism>
<accession>P12199</accession>
<sequence length="169" mass="20085">MLNILKNNNNKIQGRLSIWLIKHNLKHRPLGFDYQGIETLQIRSEDWPSLAVALYVYGFNYLRSQCAYDVEPGGLLASVYHFTKITDNADQPEEICIKIFILRKNPKIPSIFWVWKSADFQERESYDMFGIFYENHPCLKRILMPDSWLGWPLRKDYIVPNFYELQDAY</sequence>
<evidence type="ECO:0000255" key="1">
    <source>
        <dbReference type="HAMAP-Rule" id="MF_01357"/>
    </source>
</evidence>
<gene>
    <name evidence="1" type="primary">ndhJ</name>
</gene>
<reference key="1">
    <citation type="journal article" date="1986" name="Nature">
        <title>Chloroplast gene organization deduced from complete sequence of liverwort Marchantia polymorpha chloroplast DNA.</title>
        <authorList>
            <person name="Ohyama K."/>
            <person name="Fukuzawa H."/>
            <person name="Kohchi T."/>
            <person name="Shirai H."/>
            <person name="Sano T."/>
            <person name="Sano S."/>
            <person name="Umesono K."/>
            <person name="Shiki Y."/>
            <person name="Takeuchi M."/>
            <person name="Chang Z."/>
            <person name="Aota S."/>
            <person name="Inokuchi H."/>
            <person name="Ozeki H."/>
        </authorList>
    </citation>
    <scope>NUCLEOTIDE SEQUENCE [LARGE SCALE GENOMIC DNA]</scope>
</reference>
<reference key="2">
    <citation type="journal article" date="1988" name="J. Mol. Biol.">
        <title>Structure and organization of Marchantia polymorpha chloroplast genome. II. Gene organization of the large single copy region from rps'12 to atpB.</title>
        <authorList>
            <person name="Umesono K."/>
            <person name="Inokuchi H."/>
            <person name="Shiki Y."/>
            <person name="Takeuchi M."/>
            <person name="Chang Z."/>
            <person name="Fukuzawa H."/>
            <person name="Kohchi T."/>
            <person name="Shirai H."/>
            <person name="Ohyama K."/>
            <person name="Ozeki H."/>
        </authorList>
    </citation>
    <scope>NUCLEOTIDE SEQUENCE [GENOMIC DNA]</scope>
</reference>
<proteinExistence type="inferred from homology"/>
<dbReference type="EC" id="7.1.1.-" evidence="1"/>
<dbReference type="EMBL" id="X04465">
    <property type="protein sequence ID" value="CAA28087.1"/>
    <property type="molecule type" value="Genomic_DNA"/>
</dbReference>
<dbReference type="PIR" id="S01601">
    <property type="entry name" value="A05042"/>
</dbReference>
<dbReference type="RefSeq" id="NP_039301.2">
    <property type="nucleotide sequence ID" value="NC_001319.1"/>
</dbReference>
<dbReference type="SMR" id="P12199"/>
<dbReference type="GeneID" id="2702595"/>
<dbReference type="GO" id="GO:0009535">
    <property type="term" value="C:chloroplast thylakoid membrane"/>
    <property type="evidence" value="ECO:0007669"/>
    <property type="project" value="UniProtKB-SubCell"/>
</dbReference>
<dbReference type="GO" id="GO:0008137">
    <property type="term" value="F:NADH dehydrogenase (ubiquinone) activity"/>
    <property type="evidence" value="ECO:0007669"/>
    <property type="project" value="InterPro"/>
</dbReference>
<dbReference type="GO" id="GO:0048038">
    <property type="term" value="F:quinone binding"/>
    <property type="evidence" value="ECO:0007669"/>
    <property type="project" value="UniProtKB-KW"/>
</dbReference>
<dbReference type="GO" id="GO:0019684">
    <property type="term" value="P:photosynthesis, light reaction"/>
    <property type="evidence" value="ECO:0007669"/>
    <property type="project" value="UniProtKB-UniRule"/>
</dbReference>
<dbReference type="Gene3D" id="3.30.460.80">
    <property type="entry name" value="NADH:ubiquinone oxidoreductase, 30kDa subunit"/>
    <property type="match status" value="1"/>
</dbReference>
<dbReference type="HAMAP" id="MF_01357">
    <property type="entry name" value="NDH1_NuoC"/>
    <property type="match status" value="1"/>
</dbReference>
<dbReference type="InterPro" id="IPR010218">
    <property type="entry name" value="NADH_DH_suC"/>
</dbReference>
<dbReference type="InterPro" id="IPR037232">
    <property type="entry name" value="NADH_quin_OxRdtase_su_C/D-like"/>
</dbReference>
<dbReference type="InterPro" id="IPR001268">
    <property type="entry name" value="NADH_UbQ_OxRdtase_30kDa_su"/>
</dbReference>
<dbReference type="InterPro" id="IPR020396">
    <property type="entry name" value="NADH_UbQ_OxRdtase_CS"/>
</dbReference>
<dbReference type="NCBIfam" id="NF009141">
    <property type="entry name" value="PRK12494.1"/>
    <property type="match status" value="1"/>
</dbReference>
<dbReference type="PANTHER" id="PTHR10884:SF14">
    <property type="entry name" value="NADH DEHYDROGENASE [UBIQUINONE] IRON-SULFUR PROTEIN 3, MITOCHONDRIAL"/>
    <property type="match status" value="1"/>
</dbReference>
<dbReference type="PANTHER" id="PTHR10884">
    <property type="entry name" value="NADH DEHYDROGENASE UBIQUINONE IRON-SULFUR PROTEIN 3"/>
    <property type="match status" value="1"/>
</dbReference>
<dbReference type="Pfam" id="PF00329">
    <property type="entry name" value="Complex1_30kDa"/>
    <property type="match status" value="1"/>
</dbReference>
<dbReference type="SUPFAM" id="SSF143243">
    <property type="entry name" value="Nqo5-like"/>
    <property type="match status" value="1"/>
</dbReference>
<dbReference type="PROSITE" id="PS00542">
    <property type="entry name" value="COMPLEX1_30K"/>
    <property type="match status" value="1"/>
</dbReference>
<name>NDHJ_MARPO</name>
<keyword id="KW-0150">Chloroplast</keyword>
<keyword id="KW-0472">Membrane</keyword>
<keyword id="KW-0520">NAD</keyword>
<keyword id="KW-0521">NADP</keyword>
<keyword id="KW-0934">Plastid</keyword>
<keyword id="KW-0618">Plastoquinone</keyword>
<keyword id="KW-0874">Quinone</keyword>
<keyword id="KW-0793">Thylakoid</keyword>
<keyword id="KW-1278">Translocase</keyword>
<keyword id="KW-0813">Transport</keyword>
<feature type="chain" id="PRO_0000118656" description="NAD(P)H-quinone oxidoreductase subunit J, chloroplastic">
    <location>
        <begin position="1"/>
        <end position="169"/>
    </location>
</feature>